<protein>
    <recommendedName>
        <fullName evidence="1">3-methyl-2-oxobutanoate hydroxymethyltransferase</fullName>
        <ecNumber evidence="1">2.1.2.11</ecNumber>
    </recommendedName>
    <alternativeName>
        <fullName evidence="1">Ketopantoate hydroxymethyltransferase</fullName>
        <shortName evidence="1">KPHMT</shortName>
    </alternativeName>
</protein>
<comment type="function">
    <text evidence="1">Catalyzes the reversible reaction in which hydroxymethyl group from 5,10-methylenetetrahydrofolate is transferred onto alpha-ketoisovalerate to form ketopantoate.</text>
</comment>
<comment type="catalytic activity">
    <reaction evidence="1">
        <text>3-methyl-2-oxobutanoate + (6R)-5,10-methylene-5,6,7,8-tetrahydrofolate + H2O = 2-dehydropantoate + (6S)-5,6,7,8-tetrahydrofolate</text>
        <dbReference type="Rhea" id="RHEA:11824"/>
        <dbReference type="ChEBI" id="CHEBI:11561"/>
        <dbReference type="ChEBI" id="CHEBI:11851"/>
        <dbReference type="ChEBI" id="CHEBI:15377"/>
        <dbReference type="ChEBI" id="CHEBI:15636"/>
        <dbReference type="ChEBI" id="CHEBI:57453"/>
        <dbReference type="EC" id="2.1.2.11"/>
    </reaction>
</comment>
<comment type="cofactor">
    <cofactor evidence="1">
        <name>Mg(2+)</name>
        <dbReference type="ChEBI" id="CHEBI:18420"/>
    </cofactor>
    <text evidence="1">Binds 1 Mg(2+) ion per subunit.</text>
</comment>
<comment type="pathway">
    <text evidence="1">Cofactor biosynthesis; (R)-pantothenate biosynthesis; (R)-pantoate from 3-methyl-2-oxobutanoate: step 1/2.</text>
</comment>
<comment type="subunit">
    <text evidence="1">Homodecamer; pentamer of dimers.</text>
</comment>
<comment type="subcellular location">
    <subcellularLocation>
        <location evidence="1">Cytoplasm</location>
    </subcellularLocation>
</comment>
<comment type="similarity">
    <text evidence="1">Belongs to the PanB family.</text>
</comment>
<organism>
    <name type="scientific">Bacillus cereus (strain AH820)</name>
    <dbReference type="NCBI Taxonomy" id="405535"/>
    <lineage>
        <taxon>Bacteria</taxon>
        <taxon>Bacillati</taxon>
        <taxon>Bacillota</taxon>
        <taxon>Bacilli</taxon>
        <taxon>Bacillales</taxon>
        <taxon>Bacillaceae</taxon>
        <taxon>Bacillus</taxon>
        <taxon>Bacillus cereus group</taxon>
    </lineage>
</organism>
<proteinExistence type="inferred from homology"/>
<gene>
    <name evidence="1" type="primary">panB</name>
    <name type="ordered locus">BCAH820_1633</name>
</gene>
<name>PANB_BACC0</name>
<feature type="chain" id="PRO_1000118114" description="3-methyl-2-oxobutanoate hydroxymethyltransferase">
    <location>
        <begin position="1"/>
        <end position="279"/>
    </location>
</feature>
<feature type="active site" description="Proton acceptor" evidence="1">
    <location>
        <position position="181"/>
    </location>
</feature>
<feature type="binding site" evidence="1">
    <location>
        <begin position="43"/>
        <end position="44"/>
    </location>
    <ligand>
        <name>3-methyl-2-oxobutanoate</name>
        <dbReference type="ChEBI" id="CHEBI:11851"/>
    </ligand>
</feature>
<feature type="binding site" evidence="1">
    <location>
        <position position="43"/>
    </location>
    <ligand>
        <name>Mg(2+)</name>
        <dbReference type="ChEBI" id="CHEBI:18420"/>
    </ligand>
</feature>
<feature type="binding site" evidence="1">
    <location>
        <position position="82"/>
    </location>
    <ligand>
        <name>3-methyl-2-oxobutanoate</name>
        <dbReference type="ChEBI" id="CHEBI:11851"/>
    </ligand>
</feature>
<feature type="binding site" evidence="1">
    <location>
        <position position="82"/>
    </location>
    <ligand>
        <name>Mg(2+)</name>
        <dbReference type="ChEBI" id="CHEBI:18420"/>
    </ligand>
</feature>
<feature type="binding site" evidence="1">
    <location>
        <position position="112"/>
    </location>
    <ligand>
        <name>3-methyl-2-oxobutanoate</name>
        <dbReference type="ChEBI" id="CHEBI:11851"/>
    </ligand>
</feature>
<feature type="binding site" evidence="1">
    <location>
        <position position="114"/>
    </location>
    <ligand>
        <name>Mg(2+)</name>
        <dbReference type="ChEBI" id="CHEBI:18420"/>
    </ligand>
</feature>
<keyword id="KW-0963">Cytoplasm</keyword>
<keyword id="KW-0460">Magnesium</keyword>
<keyword id="KW-0479">Metal-binding</keyword>
<keyword id="KW-0566">Pantothenate biosynthesis</keyword>
<keyword id="KW-0808">Transferase</keyword>
<sequence length="279" mass="30535">MKTKTDFLKMKEQGEPITMLTAYDYPSAKLAEEAEVDMILVGDSLGMVVLGYDSTVPVTVEDMIHHTKAVRRGAKETFIVTDMPFMSYHVSLQDTMVNARRIVQESGAHALKVEGAGEVISTIHYLTNAGIPVVAHLGLTPQSVGVLGGYKVQGKDAESAKKLIEDAKKCEEAGAIALVLECVPMQLAELISEQLTIPTIGIGAGQKVDGQVLVYHDLISYGVNRVPKFVKQYTSVQEEIVRGISQYVAEVKTRQFPEEKHSFTMKEEECLALYGGKQS</sequence>
<dbReference type="EC" id="2.1.2.11" evidence="1"/>
<dbReference type="EMBL" id="CP001283">
    <property type="protein sequence ID" value="ACK91379.1"/>
    <property type="molecule type" value="Genomic_DNA"/>
</dbReference>
<dbReference type="RefSeq" id="WP_000851103.1">
    <property type="nucleotide sequence ID" value="NC_011773.1"/>
</dbReference>
<dbReference type="SMR" id="B7JHQ6"/>
<dbReference type="GeneID" id="45021534"/>
<dbReference type="KEGG" id="bcu:BCAH820_1633"/>
<dbReference type="HOGENOM" id="CLU_036645_1_0_9"/>
<dbReference type="UniPathway" id="UPA00028">
    <property type="reaction ID" value="UER00003"/>
</dbReference>
<dbReference type="Proteomes" id="UP000001363">
    <property type="component" value="Chromosome"/>
</dbReference>
<dbReference type="GO" id="GO:0005737">
    <property type="term" value="C:cytoplasm"/>
    <property type="evidence" value="ECO:0007669"/>
    <property type="project" value="UniProtKB-SubCell"/>
</dbReference>
<dbReference type="GO" id="GO:0003864">
    <property type="term" value="F:3-methyl-2-oxobutanoate hydroxymethyltransferase activity"/>
    <property type="evidence" value="ECO:0007669"/>
    <property type="project" value="UniProtKB-UniRule"/>
</dbReference>
<dbReference type="GO" id="GO:0000287">
    <property type="term" value="F:magnesium ion binding"/>
    <property type="evidence" value="ECO:0007669"/>
    <property type="project" value="TreeGrafter"/>
</dbReference>
<dbReference type="GO" id="GO:0015940">
    <property type="term" value="P:pantothenate biosynthetic process"/>
    <property type="evidence" value="ECO:0007669"/>
    <property type="project" value="UniProtKB-UniRule"/>
</dbReference>
<dbReference type="CDD" id="cd06557">
    <property type="entry name" value="KPHMT-like"/>
    <property type="match status" value="1"/>
</dbReference>
<dbReference type="FunFam" id="3.20.20.60:FF:000003">
    <property type="entry name" value="3-methyl-2-oxobutanoate hydroxymethyltransferase"/>
    <property type="match status" value="1"/>
</dbReference>
<dbReference type="Gene3D" id="3.20.20.60">
    <property type="entry name" value="Phosphoenolpyruvate-binding domains"/>
    <property type="match status" value="1"/>
</dbReference>
<dbReference type="HAMAP" id="MF_00156">
    <property type="entry name" value="PanB"/>
    <property type="match status" value="1"/>
</dbReference>
<dbReference type="InterPro" id="IPR003700">
    <property type="entry name" value="Pantoate_hydroxy_MeTrfase"/>
</dbReference>
<dbReference type="InterPro" id="IPR015813">
    <property type="entry name" value="Pyrv/PenolPyrv_kinase-like_dom"/>
</dbReference>
<dbReference type="InterPro" id="IPR040442">
    <property type="entry name" value="Pyrv_kinase-like_dom_sf"/>
</dbReference>
<dbReference type="NCBIfam" id="TIGR00222">
    <property type="entry name" value="panB"/>
    <property type="match status" value="1"/>
</dbReference>
<dbReference type="NCBIfam" id="NF001452">
    <property type="entry name" value="PRK00311.1"/>
    <property type="match status" value="1"/>
</dbReference>
<dbReference type="PANTHER" id="PTHR20881">
    <property type="entry name" value="3-METHYL-2-OXOBUTANOATE HYDROXYMETHYLTRANSFERASE"/>
    <property type="match status" value="1"/>
</dbReference>
<dbReference type="PANTHER" id="PTHR20881:SF0">
    <property type="entry name" value="3-METHYL-2-OXOBUTANOATE HYDROXYMETHYLTRANSFERASE"/>
    <property type="match status" value="1"/>
</dbReference>
<dbReference type="Pfam" id="PF02548">
    <property type="entry name" value="Pantoate_transf"/>
    <property type="match status" value="1"/>
</dbReference>
<dbReference type="PIRSF" id="PIRSF000388">
    <property type="entry name" value="Pantoate_hydroxy_MeTrfase"/>
    <property type="match status" value="1"/>
</dbReference>
<dbReference type="SUPFAM" id="SSF51621">
    <property type="entry name" value="Phosphoenolpyruvate/pyruvate domain"/>
    <property type="match status" value="1"/>
</dbReference>
<reference key="1">
    <citation type="submission" date="2008-10" db="EMBL/GenBank/DDBJ databases">
        <title>Genome sequence of Bacillus cereus AH820.</title>
        <authorList>
            <person name="Dodson R.J."/>
            <person name="Durkin A.S."/>
            <person name="Rosovitz M.J."/>
            <person name="Rasko D.A."/>
            <person name="Hoffmaster A."/>
            <person name="Ravel J."/>
            <person name="Sutton G."/>
        </authorList>
    </citation>
    <scope>NUCLEOTIDE SEQUENCE [LARGE SCALE GENOMIC DNA]</scope>
    <source>
        <strain>AH820</strain>
    </source>
</reference>
<evidence type="ECO:0000255" key="1">
    <source>
        <dbReference type="HAMAP-Rule" id="MF_00156"/>
    </source>
</evidence>
<accession>B7JHQ6</accession>